<sequence length="526" mass="59103">MELTLWTYEGPPHVGAMRVASSMKDIHYVLHAPQGDTYADLLFTMIERRGQRPPVTYTTFQARDLGGDTAELVKRNITEAVERFKPKTLLVGESCTAELIQDQPGALAKGMGFDIPIVNLELPAYSKKENWGASETFYQIIRTLLKDKANEIDKINPQRWKSLGRRPKVNILGPTLLGFRCRDDVIEIQRILSEQGIDTNVVAPLGSSPDDITRLTDADINICLYHEIAETSCEWLKRNCGMEYTTTIPIGIKNTINFINEVHEKLDLPLTNQKELEHKSKLPWYSKSVDSNYLTGKRVFVFGDGTHAIAAAKIAKDELGFEVVGLGTYSREMARQVRAAAKELNIEALITNSYLEVEDAMKKASPELVLGTQMERHSAKRLGIPCSVISTPMHVQDVPARYSPQMGWEGANVIFDDWVHPLMMGLEEHLIDMFKHDFEFVDGHQSHLGHTATKGLDNKVDEHAQSNINVQKKGNIIWTDSGRAELTKVPFFVRGKVKSNTEKYALSKGLPEINDETLYDAKAYFG</sequence>
<dbReference type="EC" id="1.3.7.7" evidence="1"/>
<dbReference type="EMBL" id="BX548174">
    <property type="protein sequence ID" value="CAE19003.1"/>
    <property type="molecule type" value="Genomic_DNA"/>
</dbReference>
<dbReference type="RefSeq" id="WP_011132179.1">
    <property type="nucleotide sequence ID" value="NC_005072.1"/>
</dbReference>
<dbReference type="SMR" id="Q7V2D6"/>
<dbReference type="STRING" id="59919.PMM0544"/>
<dbReference type="KEGG" id="pmm:PMM0544"/>
<dbReference type="eggNOG" id="COG2710">
    <property type="taxonomic scope" value="Bacteria"/>
</dbReference>
<dbReference type="HOGENOM" id="CLU_025470_0_0_3"/>
<dbReference type="OrthoDB" id="5717231at2"/>
<dbReference type="UniPathway" id="UPA00670"/>
<dbReference type="Proteomes" id="UP000001026">
    <property type="component" value="Chromosome"/>
</dbReference>
<dbReference type="GO" id="GO:0051539">
    <property type="term" value="F:4 iron, 4 sulfur cluster binding"/>
    <property type="evidence" value="ECO:0007669"/>
    <property type="project" value="UniProtKB-UniRule"/>
</dbReference>
<dbReference type="GO" id="GO:0005524">
    <property type="term" value="F:ATP binding"/>
    <property type="evidence" value="ECO:0007669"/>
    <property type="project" value="UniProtKB-UniRule"/>
</dbReference>
<dbReference type="GO" id="GO:0046872">
    <property type="term" value="F:metal ion binding"/>
    <property type="evidence" value="ECO:0007669"/>
    <property type="project" value="UniProtKB-KW"/>
</dbReference>
<dbReference type="GO" id="GO:0016730">
    <property type="term" value="F:oxidoreductase activity, acting on iron-sulfur proteins as donors"/>
    <property type="evidence" value="ECO:0007669"/>
    <property type="project" value="InterPro"/>
</dbReference>
<dbReference type="GO" id="GO:0016636">
    <property type="term" value="F:oxidoreductase activity, acting on the CH-CH group of donors, iron-sulfur protein as acceptor"/>
    <property type="evidence" value="ECO:0007669"/>
    <property type="project" value="UniProtKB-UniRule"/>
</dbReference>
<dbReference type="GO" id="GO:0036068">
    <property type="term" value="P:light-independent chlorophyll biosynthetic process"/>
    <property type="evidence" value="ECO:0007669"/>
    <property type="project" value="UniProtKB-UniRule"/>
</dbReference>
<dbReference type="GO" id="GO:0019685">
    <property type="term" value="P:photosynthesis, dark reaction"/>
    <property type="evidence" value="ECO:0007669"/>
    <property type="project" value="InterPro"/>
</dbReference>
<dbReference type="Gene3D" id="1.20.89.20">
    <property type="match status" value="1"/>
</dbReference>
<dbReference type="Gene3D" id="3.40.50.1980">
    <property type="entry name" value="Nitrogenase molybdenum iron protein domain"/>
    <property type="match status" value="3"/>
</dbReference>
<dbReference type="Gene3D" id="1.10.8.550">
    <property type="entry name" value="Proto-chlorophyllide reductase 57 kD subunit B"/>
    <property type="match status" value="1"/>
</dbReference>
<dbReference type="HAMAP" id="MF_00353">
    <property type="entry name" value="ChlB_BchB"/>
    <property type="match status" value="1"/>
</dbReference>
<dbReference type="InterPro" id="IPR050152">
    <property type="entry name" value="ChlB/BchB/BchZ"/>
</dbReference>
<dbReference type="InterPro" id="IPR013580">
    <property type="entry name" value="LI-POR_suB-like_C"/>
</dbReference>
<dbReference type="InterPro" id="IPR000510">
    <property type="entry name" value="Nase/OxRdtase_comp1"/>
</dbReference>
<dbReference type="InterPro" id="IPR042298">
    <property type="entry name" value="P-CP_red_C"/>
</dbReference>
<dbReference type="InterPro" id="IPR005969">
    <property type="entry name" value="Protochl_reductB"/>
</dbReference>
<dbReference type="InterPro" id="IPR016209">
    <property type="entry name" value="Protochlorophyllide_Rdtase"/>
</dbReference>
<dbReference type="NCBIfam" id="TIGR01278">
    <property type="entry name" value="DPOR_BchB"/>
    <property type="match status" value="1"/>
</dbReference>
<dbReference type="NCBIfam" id="NF002790">
    <property type="entry name" value="PRK02910.1-4"/>
    <property type="match status" value="1"/>
</dbReference>
<dbReference type="PANTHER" id="PTHR33712">
    <property type="entry name" value="LIGHT-INDEPENDENT PROTOCHLOROPHYLLIDE REDUCTASE SUBUNIT B"/>
    <property type="match status" value="1"/>
</dbReference>
<dbReference type="PANTHER" id="PTHR33712:SF7">
    <property type="entry name" value="LIGHT-INDEPENDENT PROTOCHLOROPHYLLIDE REDUCTASE SUBUNIT B"/>
    <property type="match status" value="1"/>
</dbReference>
<dbReference type="Pfam" id="PF00148">
    <property type="entry name" value="Oxidored_nitro"/>
    <property type="match status" value="1"/>
</dbReference>
<dbReference type="Pfam" id="PF08369">
    <property type="entry name" value="PCP_red"/>
    <property type="match status" value="1"/>
</dbReference>
<dbReference type="PIRSF" id="PIRSF000163">
    <property type="entry name" value="PCP_ChlB"/>
    <property type="match status" value="1"/>
</dbReference>
<dbReference type="SUPFAM" id="SSF53807">
    <property type="entry name" value="Helical backbone' metal receptor"/>
    <property type="match status" value="1"/>
</dbReference>
<keyword id="KW-0004">4Fe-4S</keyword>
<keyword id="KW-0067">ATP-binding</keyword>
<keyword id="KW-0149">Chlorophyll biosynthesis</keyword>
<keyword id="KW-0408">Iron</keyword>
<keyword id="KW-0411">Iron-sulfur</keyword>
<keyword id="KW-0479">Metal-binding</keyword>
<keyword id="KW-0547">Nucleotide-binding</keyword>
<keyword id="KW-0560">Oxidoreductase</keyword>
<keyword id="KW-0602">Photosynthesis</keyword>
<gene>
    <name evidence="1" type="primary">chlB</name>
    <name type="ordered locus">PMM0544</name>
</gene>
<accession>Q7V2D6</accession>
<proteinExistence type="inferred from homology"/>
<comment type="function">
    <text evidence="1">Component of the dark-operative protochlorophyllide reductase (DPOR) that uses Mg-ATP and reduced ferredoxin to reduce ring D of protochlorophyllide (Pchlide) to form chlorophyllide a (Chlide). This reaction is light-independent. The NB-protein (ChlN-ChlB) is the catalytic component of the complex.</text>
</comment>
<comment type="catalytic activity">
    <reaction evidence="1">
        <text>chlorophyllide a + oxidized 2[4Fe-4S]-[ferredoxin] + 2 ADP + 2 phosphate = protochlorophyllide a + reduced 2[4Fe-4S]-[ferredoxin] + 2 ATP + 2 H2O</text>
        <dbReference type="Rhea" id="RHEA:28202"/>
        <dbReference type="Rhea" id="RHEA-COMP:10002"/>
        <dbReference type="Rhea" id="RHEA-COMP:10004"/>
        <dbReference type="ChEBI" id="CHEBI:15377"/>
        <dbReference type="ChEBI" id="CHEBI:30616"/>
        <dbReference type="ChEBI" id="CHEBI:33722"/>
        <dbReference type="ChEBI" id="CHEBI:33723"/>
        <dbReference type="ChEBI" id="CHEBI:43474"/>
        <dbReference type="ChEBI" id="CHEBI:83348"/>
        <dbReference type="ChEBI" id="CHEBI:83350"/>
        <dbReference type="ChEBI" id="CHEBI:456216"/>
        <dbReference type="EC" id="1.3.7.7"/>
    </reaction>
</comment>
<comment type="cofactor">
    <cofactor evidence="1">
        <name>[4Fe-4S] cluster</name>
        <dbReference type="ChEBI" id="CHEBI:49883"/>
    </cofactor>
    <text evidence="1">Binds 1 [4Fe-4S] cluster per heterodimer. The cluster is bound at the heterodimer interface by residues from both subunits.</text>
</comment>
<comment type="pathway">
    <text evidence="1">Porphyrin-containing compound metabolism; chlorophyll biosynthesis (light-independent).</text>
</comment>
<comment type="subunit">
    <text evidence="1">Protochlorophyllide reductase is composed of three subunits; ChlL, ChlN and ChlB. Forms a heterotetramer of two ChlB and two ChlN subunits.</text>
</comment>
<comment type="similarity">
    <text evidence="1">Belongs to the ChlB/BchB/BchZ family.</text>
</comment>
<reference key="1">
    <citation type="journal article" date="2003" name="Nature">
        <title>Genome divergence in two Prochlorococcus ecotypes reflects oceanic niche differentiation.</title>
        <authorList>
            <person name="Rocap G."/>
            <person name="Larimer F.W."/>
            <person name="Lamerdin J.E."/>
            <person name="Malfatti S."/>
            <person name="Chain P."/>
            <person name="Ahlgren N.A."/>
            <person name="Arellano A."/>
            <person name="Coleman M."/>
            <person name="Hauser L."/>
            <person name="Hess W.R."/>
            <person name="Johnson Z.I."/>
            <person name="Land M.L."/>
            <person name="Lindell D."/>
            <person name="Post A.F."/>
            <person name="Regala W."/>
            <person name="Shah M."/>
            <person name="Shaw S.L."/>
            <person name="Steglich C."/>
            <person name="Sullivan M.B."/>
            <person name="Ting C.S."/>
            <person name="Tolonen A."/>
            <person name="Webb E.A."/>
            <person name="Zinser E.R."/>
            <person name="Chisholm S.W."/>
        </authorList>
    </citation>
    <scope>NUCLEOTIDE SEQUENCE [LARGE SCALE GENOMIC DNA]</scope>
    <source>
        <strain>CCMP1986 / NIES-2087 / MED4</strain>
    </source>
</reference>
<feature type="chain" id="PRO_1000048413" description="Light-independent protochlorophyllide reductase subunit B">
    <location>
        <begin position="1"/>
        <end position="526"/>
    </location>
</feature>
<feature type="active site" description="Proton donor" evidence="1">
    <location>
        <position position="290"/>
    </location>
</feature>
<feature type="binding site" evidence="1">
    <location>
        <position position="36"/>
    </location>
    <ligand>
        <name>[4Fe-4S] cluster</name>
        <dbReference type="ChEBI" id="CHEBI:49883"/>
        <note>ligand shared with heterodimeric partner</note>
    </ligand>
</feature>
<feature type="binding site" evidence="1">
    <location>
        <begin position="425"/>
        <end position="426"/>
    </location>
    <ligand>
        <name>substrate</name>
    </ligand>
</feature>
<organism>
    <name type="scientific">Prochlorococcus marinus subsp. pastoris (strain CCMP1986 / NIES-2087 / MED4)</name>
    <dbReference type="NCBI Taxonomy" id="59919"/>
    <lineage>
        <taxon>Bacteria</taxon>
        <taxon>Bacillati</taxon>
        <taxon>Cyanobacteriota</taxon>
        <taxon>Cyanophyceae</taxon>
        <taxon>Synechococcales</taxon>
        <taxon>Prochlorococcaceae</taxon>
        <taxon>Prochlorococcus</taxon>
    </lineage>
</organism>
<evidence type="ECO:0000255" key="1">
    <source>
        <dbReference type="HAMAP-Rule" id="MF_00353"/>
    </source>
</evidence>
<protein>
    <recommendedName>
        <fullName evidence="1">Light-independent protochlorophyllide reductase subunit B</fullName>
        <shortName evidence="1">DPOR subunit B</shortName>
        <shortName evidence="1">LI-POR subunit B</shortName>
        <ecNumber evidence="1">1.3.7.7</ecNumber>
    </recommendedName>
</protein>
<name>CHLB_PROMP</name>